<proteinExistence type="inferred from homology"/>
<keyword id="KW-0963">Cytoplasm</keyword>
<keyword id="KW-0255">Endonuclease</keyword>
<keyword id="KW-0378">Hydrolase</keyword>
<keyword id="KW-0464">Manganese</keyword>
<keyword id="KW-0479">Metal-binding</keyword>
<keyword id="KW-0540">Nuclease</keyword>
<keyword id="KW-1185">Reference proteome</keyword>
<dbReference type="EC" id="3.1.26.4" evidence="1"/>
<dbReference type="EMBL" id="CP000414">
    <property type="protein sequence ID" value="ABJ61874.1"/>
    <property type="molecule type" value="Genomic_DNA"/>
</dbReference>
<dbReference type="RefSeq" id="WP_011679550.1">
    <property type="nucleotide sequence ID" value="NC_008531.1"/>
</dbReference>
<dbReference type="SMR" id="Q03Y48"/>
<dbReference type="EnsemblBacteria" id="ABJ61874">
    <property type="protein sequence ID" value="ABJ61874"/>
    <property type="gene ID" value="LEUM_0765"/>
</dbReference>
<dbReference type="GeneID" id="29576368"/>
<dbReference type="KEGG" id="lme:LEUM_0765"/>
<dbReference type="eggNOG" id="COG0164">
    <property type="taxonomic scope" value="Bacteria"/>
</dbReference>
<dbReference type="HOGENOM" id="CLU_036532_2_1_9"/>
<dbReference type="Proteomes" id="UP000000362">
    <property type="component" value="Chromosome"/>
</dbReference>
<dbReference type="GO" id="GO:0005737">
    <property type="term" value="C:cytoplasm"/>
    <property type="evidence" value="ECO:0007669"/>
    <property type="project" value="UniProtKB-SubCell"/>
</dbReference>
<dbReference type="GO" id="GO:0032299">
    <property type="term" value="C:ribonuclease H2 complex"/>
    <property type="evidence" value="ECO:0007669"/>
    <property type="project" value="TreeGrafter"/>
</dbReference>
<dbReference type="GO" id="GO:0030145">
    <property type="term" value="F:manganese ion binding"/>
    <property type="evidence" value="ECO:0007669"/>
    <property type="project" value="UniProtKB-UniRule"/>
</dbReference>
<dbReference type="GO" id="GO:0003723">
    <property type="term" value="F:RNA binding"/>
    <property type="evidence" value="ECO:0007669"/>
    <property type="project" value="InterPro"/>
</dbReference>
<dbReference type="GO" id="GO:0004523">
    <property type="term" value="F:RNA-DNA hybrid ribonuclease activity"/>
    <property type="evidence" value="ECO:0007669"/>
    <property type="project" value="UniProtKB-UniRule"/>
</dbReference>
<dbReference type="GO" id="GO:0043137">
    <property type="term" value="P:DNA replication, removal of RNA primer"/>
    <property type="evidence" value="ECO:0007669"/>
    <property type="project" value="TreeGrafter"/>
</dbReference>
<dbReference type="GO" id="GO:0006298">
    <property type="term" value="P:mismatch repair"/>
    <property type="evidence" value="ECO:0007669"/>
    <property type="project" value="TreeGrafter"/>
</dbReference>
<dbReference type="CDD" id="cd07182">
    <property type="entry name" value="RNase_HII_bacteria_HII_like"/>
    <property type="match status" value="1"/>
</dbReference>
<dbReference type="FunFam" id="3.30.420.10:FF:000006">
    <property type="entry name" value="Ribonuclease HII"/>
    <property type="match status" value="1"/>
</dbReference>
<dbReference type="Gene3D" id="3.30.420.10">
    <property type="entry name" value="Ribonuclease H-like superfamily/Ribonuclease H"/>
    <property type="match status" value="1"/>
</dbReference>
<dbReference type="HAMAP" id="MF_00052_B">
    <property type="entry name" value="RNase_HII_B"/>
    <property type="match status" value="1"/>
</dbReference>
<dbReference type="InterPro" id="IPR022898">
    <property type="entry name" value="RNase_HII"/>
</dbReference>
<dbReference type="InterPro" id="IPR001352">
    <property type="entry name" value="RNase_HII/HIII"/>
</dbReference>
<dbReference type="InterPro" id="IPR024567">
    <property type="entry name" value="RNase_HII/HIII_dom"/>
</dbReference>
<dbReference type="InterPro" id="IPR012337">
    <property type="entry name" value="RNaseH-like_sf"/>
</dbReference>
<dbReference type="InterPro" id="IPR036397">
    <property type="entry name" value="RNaseH_sf"/>
</dbReference>
<dbReference type="NCBIfam" id="NF000594">
    <property type="entry name" value="PRK00015.1-1"/>
    <property type="match status" value="1"/>
</dbReference>
<dbReference type="NCBIfam" id="NF000595">
    <property type="entry name" value="PRK00015.1-3"/>
    <property type="match status" value="1"/>
</dbReference>
<dbReference type="PANTHER" id="PTHR10954">
    <property type="entry name" value="RIBONUCLEASE H2 SUBUNIT A"/>
    <property type="match status" value="1"/>
</dbReference>
<dbReference type="PANTHER" id="PTHR10954:SF18">
    <property type="entry name" value="RIBONUCLEASE HII"/>
    <property type="match status" value="1"/>
</dbReference>
<dbReference type="Pfam" id="PF01351">
    <property type="entry name" value="RNase_HII"/>
    <property type="match status" value="1"/>
</dbReference>
<dbReference type="SUPFAM" id="SSF53098">
    <property type="entry name" value="Ribonuclease H-like"/>
    <property type="match status" value="1"/>
</dbReference>
<dbReference type="PROSITE" id="PS51975">
    <property type="entry name" value="RNASE_H_2"/>
    <property type="match status" value="1"/>
</dbReference>
<reference key="1">
    <citation type="journal article" date="2006" name="Proc. Natl. Acad. Sci. U.S.A.">
        <title>Comparative genomics of the lactic acid bacteria.</title>
        <authorList>
            <person name="Makarova K.S."/>
            <person name="Slesarev A."/>
            <person name="Wolf Y.I."/>
            <person name="Sorokin A."/>
            <person name="Mirkin B."/>
            <person name="Koonin E.V."/>
            <person name="Pavlov A."/>
            <person name="Pavlova N."/>
            <person name="Karamychev V."/>
            <person name="Polouchine N."/>
            <person name="Shakhova V."/>
            <person name="Grigoriev I."/>
            <person name="Lou Y."/>
            <person name="Rohksar D."/>
            <person name="Lucas S."/>
            <person name="Huang K."/>
            <person name="Goodstein D.M."/>
            <person name="Hawkins T."/>
            <person name="Plengvidhya V."/>
            <person name="Welker D."/>
            <person name="Hughes J."/>
            <person name="Goh Y."/>
            <person name="Benson A."/>
            <person name="Baldwin K."/>
            <person name="Lee J.-H."/>
            <person name="Diaz-Muniz I."/>
            <person name="Dosti B."/>
            <person name="Smeianov V."/>
            <person name="Wechter W."/>
            <person name="Barabote R."/>
            <person name="Lorca G."/>
            <person name="Altermann E."/>
            <person name="Barrangou R."/>
            <person name="Ganesan B."/>
            <person name="Xie Y."/>
            <person name="Rawsthorne H."/>
            <person name="Tamir D."/>
            <person name="Parker C."/>
            <person name="Breidt F."/>
            <person name="Broadbent J.R."/>
            <person name="Hutkins R."/>
            <person name="O'Sullivan D."/>
            <person name="Steele J."/>
            <person name="Unlu G."/>
            <person name="Saier M.H. Jr."/>
            <person name="Klaenhammer T."/>
            <person name="Richardson P."/>
            <person name="Kozyavkin S."/>
            <person name="Weimer B.C."/>
            <person name="Mills D.A."/>
        </authorList>
    </citation>
    <scope>NUCLEOTIDE SEQUENCE [LARGE SCALE GENOMIC DNA]</scope>
    <source>
        <strain>ATCC 8293 / DSM 20343 / BCRC 11652 / CCM 1803 / JCM 6124 / NCDO 523 / NBRC 100496 / NCIMB 8023 / NCTC 12954 / NRRL B-1118 / 37Y</strain>
    </source>
</reference>
<feature type="chain" id="PRO_0000334914" description="Ribonuclease HII">
    <location>
        <begin position="1"/>
        <end position="253"/>
    </location>
</feature>
<feature type="domain" description="RNase H type-2" evidence="2">
    <location>
        <begin position="70"/>
        <end position="253"/>
    </location>
</feature>
<feature type="binding site" evidence="1">
    <location>
        <position position="76"/>
    </location>
    <ligand>
        <name>a divalent metal cation</name>
        <dbReference type="ChEBI" id="CHEBI:60240"/>
    </ligand>
</feature>
<feature type="binding site" evidence="1">
    <location>
        <position position="77"/>
    </location>
    <ligand>
        <name>a divalent metal cation</name>
        <dbReference type="ChEBI" id="CHEBI:60240"/>
    </ligand>
</feature>
<feature type="binding site" evidence="1">
    <location>
        <position position="168"/>
    </location>
    <ligand>
        <name>a divalent metal cation</name>
        <dbReference type="ChEBI" id="CHEBI:60240"/>
    </ligand>
</feature>
<evidence type="ECO:0000255" key="1">
    <source>
        <dbReference type="HAMAP-Rule" id="MF_00052"/>
    </source>
</evidence>
<evidence type="ECO:0000255" key="2">
    <source>
        <dbReference type="PROSITE-ProRule" id="PRU01319"/>
    </source>
</evidence>
<organism>
    <name type="scientific">Leuconostoc mesenteroides subsp. mesenteroides (strain ATCC 8293 / DSM 20343 / BCRC 11652 / CCM 1803 / JCM 6124 / NCDO 523 / NBRC 100496 / NCIMB 8023 / NCTC 12954 / NRRL B-1118 / 37Y)</name>
    <dbReference type="NCBI Taxonomy" id="203120"/>
    <lineage>
        <taxon>Bacteria</taxon>
        <taxon>Bacillati</taxon>
        <taxon>Bacillota</taxon>
        <taxon>Bacilli</taxon>
        <taxon>Lactobacillales</taxon>
        <taxon>Lactobacillaceae</taxon>
        <taxon>Leuconostoc</taxon>
    </lineage>
</organism>
<gene>
    <name evidence="1" type="primary">rnhB</name>
    <name type="ordered locus">LEUM_0765</name>
</gene>
<protein>
    <recommendedName>
        <fullName evidence="1">Ribonuclease HII</fullName>
        <shortName evidence="1">RNase HII</shortName>
        <ecNumber evidence="1">3.1.26.4</ecNumber>
    </recommendedName>
</protein>
<accession>Q03Y48</accession>
<comment type="function">
    <text evidence="1">Endonuclease that specifically degrades the RNA of RNA-DNA hybrids.</text>
</comment>
<comment type="catalytic activity">
    <reaction evidence="1">
        <text>Endonucleolytic cleavage to 5'-phosphomonoester.</text>
        <dbReference type="EC" id="3.1.26.4"/>
    </reaction>
</comment>
<comment type="cofactor">
    <cofactor evidence="1">
        <name>Mn(2+)</name>
        <dbReference type="ChEBI" id="CHEBI:29035"/>
    </cofactor>
    <cofactor evidence="1">
        <name>Mg(2+)</name>
        <dbReference type="ChEBI" id="CHEBI:18420"/>
    </cofactor>
    <text evidence="1">Manganese or magnesium. Binds 1 divalent metal ion per monomer in the absence of substrate. May bind a second metal ion after substrate binding.</text>
</comment>
<comment type="subcellular location">
    <subcellularLocation>
        <location evidence="1">Cytoplasm</location>
    </subcellularLocation>
</comment>
<comment type="similarity">
    <text evidence="1">Belongs to the RNase HII family.</text>
</comment>
<name>RNH2_LEUMM</name>
<sequence>MTDTIANIKLQLKNTSPNDEQLLIWQQDKRVGVQNALKAWQKKQVMLREKREHFLSRFDIERQYWMQGYDLIAGVDEVGRGPLAGPVVAAAVILPHDFDVLDVIDSKQLSAKKRDELYDKIIEKAISIGVGRVEASIIDEINIYEAARVAMTEAVNQLAPIPEALLIDAMRLDLDLPQEFLIKGDARSNSIGAASIIAKVTRDRLMASYGLKYPGYGFEKNAGYGTKEHLEGIKKIGITPIHRKTFAPIKDIL</sequence>